<evidence type="ECO:0000255" key="1">
    <source>
        <dbReference type="HAMAP-Rule" id="MF_01197"/>
    </source>
</evidence>
<evidence type="ECO:0000256" key="2">
    <source>
        <dbReference type="SAM" id="MobiDB-lite"/>
    </source>
</evidence>
<dbReference type="EMBL" id="CP000240">
    <property type="protein sequence ID" value="ABD02704.1"/>
    <property type="molecule type" value="Genomic_DNA"/>
</dbReference>
<dbReference type="RefSeq" id="WP_011433347.1">
    <property type="nucleotide sequence ID" value="NC_007776.1"/>
</dbReference>
<dbReference type="SMR" id="Q2JKS7"/>
<dbReference type="STRING" id="321332.CYB_1747"/>
<dbReference type="KEGG" id="cyb:CYB_1747"/>
<dbReference type="eggNOG" id="COG1799">
    <property type="taxonomic scope" value="Bacteria"/>
</dbReference>
<dbReference type="HOGENOM" id="CLU_078499_1_1_3"/>
<dbReference type="OrthoDB" id="9815206at2"/>
<dbReference type="Proteomes" id="UP000001938">
    <property type="component" value="Chromosome"/>
</dbReference>
<dbReference type="GO" id="GO:0005737">
    <property type="term" value="C:cytoplasm"/>
    <property type="evidence" value="ECO:0007669"/>
    <property type="project" value="UniProtKB-SubCell"/>
</dbReference>
<dbReference type="GO" id="GO:0000917">
    <property type="term" value="P:division septum assembly"/>
    <property type="evidence" value="ECO:0007669"/>
    <property type="project" value="UniProtKB-KW"/>
</dbReference>
<dbReference type="GO" id="GO:0043093">
    <property type="term" value="P:FtsZ-dependent cytokinesis"/>
    <property type="evidence" value="ECO:0007669"/>
    <property type="project" value="UniProtKB-UniRule"/>
</dbReference>
<dbReference type="Gene3D" id="3.30.110.150">
    <property type="entry name" value="SepF-like protein"/>
    <property type="match status" value="1"/>
</dbReference>
<dbReference type="HAMAP" id="MF_01197">
    <property type="entry name" value="SepF"/>
    <property type="match status" value="1"/>
</dbReference>
<dbReference type="InterPro" id="IPR023052">
    <property type="entry name" value="Cell_div_SepF"/>
</dbReference>
<dbReference type="InterPro" id="IPR007561">
    <property type="entry name" value="Cell_div_SepF/SepF-rel"/>
</dbReference>
<dbReference type="InterPro" id="IPR038594">
    <property type="entry name" value="SepF-like_sf"/>
</dbReference>
<dbReference type="PANTHER" id="PTHR35798">
    <property type="entry name" value="CELL DIVISION PROTEIN SEPF"/>
    <property type="match status" value="1"/>
</dbReference>
<dbReference type="PANTHER" id="PTHR35798:SF1">
    <property type="entry name" value="CELL DIVISION PROTEIN SEPF"/>
    <property type="match status" value="1"/>
</dbReference>
<dbReference type="Pfam" id="PF04472">
    <property type="entry name" value="SepF"/>
    <property type="match status" value="1"/>
</dbReference>
<sequence length="191" mass="21138">MEGQDDYQLLYEGRRSQPAAPPEEEEVSTLPRGRRQRGVEAGEGSAGREESRGHRRSQHRDRSAGGSMGSNVIGLPGVNPPTSEVVVMEPRSFDEMAQVIQYLRERKTVIMNLTLMDPAEAQRSVDFVAGGTYAIDGHQERIGENIFLFTPSTVMVSTPSSQVVQPLQRPLQSPTPLWPSTYEHLQAVGQH</sequence>
<name>SEPF_SYNJB</name>
<protein>
    <recommendedName>
        <fullName evidence="1">Cell division protein SepF</fullName>
    </recommendedName>
</protein>
<organism>
    <name type="scientific">Synechococcus sp. (strain JA-2-3B'a(2-13))</name>
    <name type="common">Cyanobacteria bacterium Yellowstone B-Prime</name>
    <dbReference type="NCBI Taxonomy" id="321332"/>
    <lineage>
        <taxon>Bacteria</taxon>
        <taxon>Bacillati</taxon>
        <taxon>Cyanobacteriota</taxon>
        <taxon>Cyanophyceae</taxon>
        <taxon>Synechococcales</taxon>
        <taxon>Synechococcaceae</taxon>
        <taxon>Synechococcus</taxon>
    </lineage>
</organism>
<comment type="function">
    <text evidence="1">Cell division protein that is part of the divisome complex and is recruited early to the Z-ring. Probably stimulates Z-ring formation, perhaps through the cross-linking of FtsZ protofilaments. Its function overlaps with FtsA.</text>
</comment>
<comment type="subunit">
    <text evidence="1">Homodimer. Interacts with FtsZ.</text>
</comment>
<comment type="subcellular location">
    <subcellularLocation>
        <location evidence="1">Cytoplasm</location>
    </subcellularLocation>
    <text evidence="1">Localizes to the division site, in a FtsZ-dependent manner.</text>
</comment>
<comment type="similarity">
    <text evidence="1">Belongs to the SepF family.</text>
</comment>
<accession>Q2JKS7</accession>
<gene>
    <name evidence="1" type="primary">sepF</name>
    <name type="ordered locus">CYB_1747</name>
</gene>
<proteinExistence type="inferred from homology"/>
<keyword id="KW-0131">Cell cycle</keyword>
<keyword id="KW-0132">Cell division</keyword>
<keyword id="KW-0963">Cytoplasm</keyword>
<keyword id="KW-1185">Reference proteome</keyword>
<keyword id="KW-0717">Septation</keyword>
<feature type="chain" id="PRO_0000334126" description="Cell division protein SepF">
    <location>
        <begin position="1"/>
        <end position="191"/>
    </location>
</feature>
<feature type="region of interest" description="Disordered" evidence="2">
    <location>
        <begin position="1"/>
        <end position="77"/>
    </location>
</feature>
<reference key="1">
    <citation type="journal article" date="2007" name="ISME J.">
        <title>Population level functional diversity in a microbial community revealed by comparative genomic and metagenomic analyses.</title>
        <authorList>
            <person name="Bhaya D."/>
            <person name="Grossman A.R."/>
            <person name="Steunou A.-S."/>
            <person name="Khuri N."/>
            <person name="Cohan F.M."/>
            <person name="Hamamura N."/>
            <person name="Melendrez M.C."/>
            <person name="Bateson M.M."/>
            <person name="Ward D.M."/>
            <person name="Heidelberg J.F."/>
        </authorList>
    </citation>
    <scope>NUCLEOTIDE SEQUENCE [LARGE SCALE GENOMIC DNA]</scope>
    <source>
        <strain>JA-2-3B'a(2-13)</strain>
    </source>
</reference>